<comment type="function">
    <text evidence="1">Catalyzes the conversion of 3-deoxy-D-arabino-heptulosonate 7-phosphate (DAHP) to dehydroquinate (DHQ).</text>
</comment>
<comment type="catalytic activity">
    <reaction evidence="1">
        <text>7-phospho-2-dehydro-3-deoxy-D-arabino-heptonate = 3-dehydroquinate + phosphate</text>
        <dbReference type="Rhea" id="RHEA:21968"/>
        <dbReference type="ChEBI" id="CHEBI:32364"/>
        <dbReference type="ChEBI" id="CHEBI:43474"/>
        <dbReference type="ChEBI" id="CHEBI:58394"/>
        <dbReference type="EC" id="4.2.3.4"/>
    </reaction>
</comment>
<comment type="cofactor">
    <cofactor evidence="1">
        <name>Co(2+)</name>
        <dbReference type="ChEBI" id="CHEBI:48828"/>
    </cofactor>
    <cofactor evidence="1">
        <name>Zn(2+)</name>
        <dbReference type="ChEBI" id="CHEBI:29105"/>
    </cofactor>
    <text evidence="1">Binds 1 divalent metal cation per subunit. Can use either Co(2+) or Zn(2+).</text>
</comment>
<comment type="cofactor">
    <cofactor evidence="1">
        <name>NAD(+)</name>
        <dbReference type="ChEBI" id="CHEBI:57540"/>
    </cofactor>
</comment>
<comment type="pathway">
    <text evidence="1">Metabolic intermediate biosynthesis; chorismate biosynthesis; chorismate from D-erythrose 4-phosphate and phosphoenolpyruvate: step 2/7.</text>
</comment>
<comment type="subcellular location">
    <subcellularLocation>
        <location evidence="1">Cytoplasm</location>
    </subcellularLocation>
</comment>
<comment type="similarity">
    <text evidence="1">Belongs to the sugar phosphate cyclases superfamily. Dehydroquinate synthase family.</text>
</comment>
<sequence length="368" mass="39238">MITLQVDLGERSYPIHIGTGLLGNAELLRPHVRGQHAVIVTNETVGPLYAARVEASLKELGKTVRVVTLPDGEAFKQWETLNLIFDALLSAGADRKTTLVALGGGVVGDMTGFAAACYMRGVPFVQVPTTLLSQVDSSVGGKTGINHPLGKNMIGAFHQPNAVIADIDTLRTLPARELAAGMAEVIKHGAIADADYFAWIERNIAALNSCDPDLMALAVQRSCEIKAGVVAQDEREGGLRAILNFGHTFGHAIEAGMGYGEWLHGEAVGCGMVMAADLSHRLGFIDTETRARIRQLTQAAMLPIVAPELGTDRYIELMKVDKKAEAGSIKFILLKKLGEAFITTVPDTDLRATLAQAVLKPPTEATVA</sequence>
<proteinExistence type="inferred from homology"/>
<protein>
    <recommendedName>
        <fullName evidence="1">3-dehydroquinate synthase</fullName>
        <shortName evidence="1">DHQS</shortName>
        <ecNumber evidence="1">4.2.3.4</ecNumber>
    </recommendedName>
</protein>
<name>AROB_CUPPJ</name>
<accession>Q46WJ4</accession>
<evidence type="ECO:0000255" key="1">
    <source>
        <dbReference type="HAMAP-Rule" id="MF_00110"/>
    </source>
</evidence>
<keyword id="KW-0028">Amino-acid biosynthesis</keyword>
<keyword id="KW-0057">Aromatic amino acid biosynthesis</keyword>
<keyword id="KW-0170">Cobalt</keyword>
<keyword id="KW-0963">Cytoplasm</keyword>
<keyword id="KW-0456">Lyase</keyword>
<keyword id="KW-0479">Metal-binding</keyword>
<keyword id="KW-0520">NAD</keyword>
<keyword id="KW-0547">Nucleotide-binding</keyword>
<keyword id="KW-0862">Zinc</keyword>
<organism>
    <name type="scientific">Cupriavidus pinatubonensis (strain JMP 134 / LMG 1197)</name>
    <name type="common">Cupriavidus necator (strain JMP 134)</name>
    <dbReference type="NCBI Taxonomy" id="264198"/>
    <lineage>
        <taxon>Bacteria</taxon>
        <taxon>Pseudomonadati</taxon>
        <taxon>Pseudomonadota</taxon>
        <taxon>Betaproteobacteria</taxon>
        <taxon>Burkholderiales</taxon>
        <taxon>Burkholderiaceae</taxon>
        <taxon>Cupriavidus</taxon>
    </lineage>
</organism>
<dbReference type="EC" id="4.2.3.4" evidence="1"/>
<dbReference type="EMBL" id="CP000090">
    <property type="protein sequence ID" value="AAZ62489.1"/>
    <property type="molecule type" value="Genomic_DNA"/>
</dbReference>
<dbReference type="SMR" id="Q46WJ4"/>
<dbReference type="STRING" id="264198.Reut_A3129"/>
<dbReference type="KEGG" id="reu:Reut_A3129"/>
<dbReference type="eggNOG" id="COG0337">
    <property type="taxonomic scope" value="Bacteria"/>
</dbReference>
<dbReference type="HOGENOM" id="CLU_001201_0_2_4"/>
<dbReference type="OrthoDB" id="9806583at2"/>
<dbReference type="UniPathway" id="UPA00053">
    <property type="reaction ID" value="UER00085"/>
</dbReference>
<dbReference type="GO" id="GO:0005737">
    <property type="term" value="C:cytoplasm"/>
    <property type="evidence" value="ECO:0007669"/>
    <property type="project" value="UniProtKB-SubCell"/>
</dbReference>
<dbReference type="GO" id="GO:0003856">
    <property type="term" value="F:3-dehydroquinate synthase activity"/>
    <property type="evidence" value="ECO:0007669"/>
    <property type="project" value="UniProtKB-UniRule"/>
</dbReference>
<dbReference type="GO" id="GO:0046872">
    <property type="term" value="F:metal ion binding"/>
    <property type="evidence" value="ECO:0007669"/>
    <property type="project" value="UniProtKB-KW"/>
</dbReference>
<dbReference type="GO" id="GO:0000166">
    <property type="term" value="F:nucleotide binding"/>
    <property type="evidence" value="ECO:0007669"/>
    <property type="project" value="UniProtKB-KW"/>
</dbReference>
<dbReference type="GO" id="GO:0008652">
    <property type="term" value="P:amino acid biosynthetic process"/>
    <property type="evidence" value="ECO:0007669"/>
    <property type="project" value="UniProtKB-KW"/>
</dbReference>
<dbReference type="GO" id="GO:0009073">
    <property type="term" value="P:aromatic amino acid family biosynthetic process"/>
    <property type="evidence" value="ECO:0007669"/>
    <property type="project" value="UniProtKB-KW"/>
</dbReference>
<dbReference type="GO" id="GO:0009423">
    <property type="term" value="P:chorismate biosynthetic process"/>
    <property type="evidence" value="ECO:0007669"/>
    <property type="project" value="UniProtKB-UniRule"/>
</dbReference>
<dbReference type="CDD" id="cd08195">
    <property type="entry name" value="DHQS"/>
    <property type="match status" value="1"/>
</dbReference>
<dbReference type="FunFam" id="3.40.50.1970:FF:000001">
    <property type="entry name" value="3-dehydroquinate synthase"/>
    <property type="match status" value="1"/>
</dbReference>
<dbReference type="Gene3D" id="3.40.50.1970">
    <property type="match status" value="1"/>
</dbReference>
<dbReference type="Gene3D" id="1.20.1090.10">
    <property type="entry name" value="Dehydroquinate synthase-like - alpha domain"/>
    <property type="match status" value="1"/>
</dbReference>
<dbReference type="HAMAP" id="MF_00110">
    <property type="entry name" value="DHQ_synthase"/>
    <property type="match status" value="1"/>
</dbReference>
<dbReference type="InterPro" id="IPR050071">
    <property type="entry name" value="Dehydroquinate_synthase"/>
</dbReference>
<dbReference type="InterPro" id="IPR016037">
    <property type="entry name" value="DHQ_synth_AroB"/>
</dbReference>
<dbReference type="InterPro" id="IPR030963">
    <property type="entry name" value="DHQ_synth_fam"/>
</dbReference>
<dbReference type="InterPro" id="IPR030960">
    <property type="entry name" value="DHQS/DOIS_N"/>
</dbReference>
<dbReference type="InterPro" id="IPR056179">
    <property type="entry name" value="DHQS_C"/>
</dbReference>
<dbReference type="NCBIfam" id="TIGR01357">
    <property type="entry name" value="aroB"/>
    <property type="match status" value="1"/>
</dbReference>
<dbReference type="PANTHER" id="PTHR43622">
    <property type="entry name" value="3-DEHYDROQUINATE SYNTHASE"/>
    <property type="match status" value="1"/>
</dbReference>
<dbReference type="PANTHER" id="PTHR43622:SF7">
    <property type="entry name" value="3-DEHYDROQUINATE SYNTHASE, CHLOROPLASTIC"/>
    <property type="match status" value="1"/>
</dbReference>
<dbReference type="Pfam" id="PF01761">
    <property type="entry name" value="DHQ_synthase"/>
    <property type="match status" value="1"/>
</dbReference>
<dbReference type="Pfam" id="PF24621">
    <property type="entry name" value="DHQS_C"/>
    <property type="match status" value="1"/>
</dbReference>
<dbReference type="PIRSF" id="PIRSF001455">
    <property type="entry name" value="DHQ_synth"/>
    <property type="match status" value="1"/>
</dbReference>
<dbReference type="SUPFAM" id="SSF56796">
    <property type="entry name" value="Dehydroquinate synthase-like"/>
    <property type="match status" value="1"/>
</dbReference>
<feature type="chain" id="PRO_0000231119" description="3-dehydroquinate synthase">
    <location>
        <begin position="1"/>
        <end position="368"/>
    </location>
</feature>
<feature type="binding site" evidence="1">
    <location>
        <begin position="71"/>
        <end position="76"/>
    </location>
    <ligand>
        <name>NAD(+)</name>
        <dbReference type="ChEBI" id="CHEBI:57540"/>
    </ligand>
</feature>
<feature type="binding site" evidence="1">
    <location>
        <begin position="105"/>
        <end position="109"/>
    </location>
    <ligand>
        <name>NAD(+)</name>
        <dbReference type="ChEBI" id="CHEBI:57540"/>
    </ligand>
</feature>
<feature type="binding site" evidence="1">
    <location>
        <begin position="129"/>
        <end position="130"/>
    </location>
    <ligand>
        <name>NAD(+)</name>
        <dbReference type="ChEBI" id="CHEBI:57540"/>
    </ligand>
</feature>
<feature type="binding site" evidence="1">
    <location>
        <position position="142"/>
    </location>
    <ligand>
        <name>NAD(+)</name>
        <dbReference type="ChEBI" id="CHEBI:57540"/>
    </ligand>
</feature>
<feature type="binding site" evidence="1">
    <location>
        <position position="151"/>
    </location>
    <ligand>
        <name>NAD(+)</name>
        <dbReference type="ChEBI" id="CHEBI:57540"/>
    </ligand>
</feature>
<feature type="binding site" evidence="1">
    <location>
        <begin position="169"/>
        <end position="172"/>
    </location>
    <ligand>
        <name>NAD(+)</name>
        <dbReference type="ChEBI" id="CHEBI:57540"/>
    </ligand>
</feature>
<feature type="binding site" evidence="1">
    <location>
        <position position="184"/>
    </location>
    <ligand>
        <name>Zn(2+)</name>
        <dbReference type="ChEBI" id="CHEBI:29105"/>
    </ligand>
</feature>
<feature type="binding site" evidence="1">
    <location>
        <position position="247"/>
    </location>
    <ligand>
        <name>Zn(2+)</name>
        <dbReference type="ChEBI" id="CHEBI:29105"/>
    </ligand>
</feature>
<feature type="binding site" evidence="1">
    <location>
        <position position="264"/>
    </location>
    <ligand>
        <name>Zn(2+)</name>
        <dbReference type="ChEBI" id="CHEBI:29105"/>
    </ligand>
</feature>
<gene>
    <name evidence="1" type="primary">aroB</name>
    <name type="ordered locus">Reut_A3129</name>
</gene>
<reference key="1">
    <citation type="journal article" date="2010" name="PLoS ONE">
        <title>The complete multipartite genome sequence of Cupriavidus necator JMP134, a versatile pollutant degrader.</title>
        <authorList>
            <person name="Lykidis A."/>
            <person name="Perez-Pantoja D."/>
            <person name="Ledger T."/>
            <person name="Mavromatis K."/>
            <person name="Anderson I.J."/>
            <person name="Ivanova N.N."/>
            <person name="Hooper S.D."/>
            <person name="Lapidus A."/>
            <person name="Lucas S."/>
            <person name="Gonzalez B."/>
            <person name="Kyrpides N.C."/>
        </authorList>
    </citation>
    <scope>NUCLEOTIDE SEQUENCE [LARGE SCALE GENOMIC DNA]</scope>
    <source>
        <strain>JMP134 / LMG 1197</strain>
    </source>
</reference>